<dbReference type="EMBL" id="AM849034">
    <property type="protein sequence ID" value="CAQ00582.1"/>
    <property type="molecule type" value="Genomic_DNA"/>
</dbReference>
<dbReference type="RefSeq" id="WP_012297912.1">
    <property type="nucleotide sequence ID" value="NZ_MZMN01000003.1"/>
</dbReference>
<dbReference type="SMR" id="B0RCI3"/>
<dbReference type="STRING" id="31964.CMS0462"/>
<dbReference type="KEGG" id="cms:CMS0462"/>
<dbReference type="eggNOG" id="COG2060">
    <property type="taxonomic scope" value="Bacteria"/>
</dbReference>
<dbReference type="HOGENOM" id="CLU_018614_3_0_11"/>
<dbReference type="OrthoDB" id="9763796at2"/>
<dbReference type="Proteomes" id="UP000001318">
    <property type="component" value="Chromosome"/>
</dbReference>
<dbReference type="GO" id="GO:0005886">
    <property type="term" value="C:plasma membrane"/>
    <property type="evidence" value="ECO:0007669"/>
    <property type="project" value="UniProtKB-SubCell"/>
</dbReference>
<dbReference type="GO" id="GO:0008556">
    <property type="term" value="F:P-type potassium transmembrane transporter activity"/>
    <property type="evidence" value="ECO:0007669"/>
    <property type="project" value="InterPro"/>
</dbReference>
<dbReference type="GO" id="GO:0030955">
    <property type="term" value="F:potassium ion binding"/>
    <property type="evidence" value="ECO:0007669"/>
    <property type="project" value="UniProtKB-UniRule"/>
</dbReference>
<dbReference type="HAMAP" id="MF_00275">
    <property type="entry name" value="KdpA"/>
    <property type="match status" value="1"/>
</dbReference>
<dbReference type="InterPro" id="IPR004623">
    <property type="entry name" value="KdpA"/>
</dbReference>
<dbReference type="NCBIfam" id="TIGR00680">
    <property type="entry name" value="kdpA"/>
    <property type="match status" value="1"/>
</dbReference>
<dbReference type="PANTHER" id="PTHR30607">
    <property type="entry name" value="POTASSIUM-TRANSPORTING ATPASE A CHAIN"/>
    <property type="match status" value="1"/>
</dbReference>
<dbReference type="PANTHER" id="PTHR30607:SF2">
    <property type="entry name" value="POTASSIUM-TRANSPORTING ATPASE POTASSIUM-BINDING SUBUNIT"/>
    <property type="match status" value="1"/>
</dbReference>
<dbReference type="Pfam" id="PF03814">
    <property type="entry name" value="KdpA"/>
    <property type="match status" value="1"/>
</dbReference>
<dbReference type="PIRSF" id="PIRSF001294">
    <property type="entry name" value="K_ATPaseA"/>
    <property type="match status" value="1"/>
</dbReference>
<proteinExistence type="inferred from homology"/>
<evidence type="ECO:0000255" key="1">
    <source>
        <dbReference type="HAMAP-Rule" id="MF_00275"/>
    </source>
</evidence>
<accession>B0RCI3</accession>
<feature type="chain" id="PRO_1000078780" description="Potassium-transporting ATPase potassium-binding subunit">
    <location>
        <begin position="1"/>
        <end position="558"/>
    </location>
</feature>
<feature type="transmembrane region" description="Helical" evidence="1">
    <location>
        <begin position="1"/>
        <end position="21"/>
    </location>
</feature>
<feature type="transmembrane region" description="Helical" evidence="1">
    <location>
        <begin position="58"/>
        <end position="78"/>
    </location>
</feature>
<feature type="transmembrane region" description="Helical" evidence="1">
    <location>
        <begin position="85"/>
        <end position="105"/>
    </location>
</feature>
<feature type="transmembrane region" description="Helical" evidence="1">
    <location>
        <begin position="130"/>
        <end position="150"/>
    </location>
</feature>
<feature type="transmembrane region" description="Helical" evidence="1">
    <location>
        <begin position="179"/>
        <end position="199"/>
    </location>
</feature>
<feature type="transmembrane region" description="Helical" evidence="1">
    <location>
        <begin position="245"/>
        <end position="265"/>
    </location>
</feature>
<feature type="transmembrane region" description="Helical" evidence="1">
    <location>
        <begin position="279"/>
        <end position="299"/>
    </location>
</feature>
<feature type="transmembrane region" description="Helical" evidence="1">
    <location>
        <begin position="374"/>
        <end position="394"/>
    </location>
</feature>
<feature type="transmembrane region" description="Helical" evidence="1">
    <location>
        <begin position="416"/>
        <end position="436"/>
    </location>
</feature>
<feature type="transmembrane region" description="Helical" evidence="1">
    <location>
        <begin position="484"/>
        <end position="504"/>
    </location>
</feature>
<feature type="transmembrane region" description="Helical" evidence="1">
    <location>
        <begin position="527"/>
        <end position="547"/>
    </location>
</feature>
<sequence>MDTLAGILQVASVVLVLVLVHRPLGDLMARMYESRHDTRVERGIYRLIGVDPRSEQTWPAYLRAVLAFSLVGVLVVYGMQRLQAFLPYALGLPAVPEGISFNTAVSFVTNTNWQSYSPEATMGYTVQLAGLAVQNFVSAAVGIAVAIALVRGFARTRSGTIGNMWVDLIRGSLRLLLPLSLVTAVVLIAGGVIQNFAGFQDVQTLAGGTQTIPGGPVASQEAIKMLGTNGGGFFNANSAHPFEDPTAWTSAFQVLLMLVIPFSLPRTFGKMVGDTRQGTAIAAVMATIAVASLTALTLFELQGAGSAPMAAGAAMEGKEQRVGIIGSALFGTVSTLTSTGAVNSMHDSYTALGGMMPMLNMMLGEVAPGGVGSGLYGMLVLAVIAVFVAGLLVGRTPEYLGKKIGPREIKLASLYILVTPILVLVGTALSFAIPAVRDDVEGTSILNSGLHGLSEVVYAFTSAANNNGSAFAGLTASTPWFTTALGVAMLLGRFVPIVLVLALAGSLAAQDRIPTTSGTLPTHRPQFVGLLIGVTVIVTALTYFPVLALGPLAEGLAS</sequence>
<gene>
    <name evidence="1" type="primary">kdpA</name>
    <name type="ordered locus">CMS0462</name>
</gene>
<reference key="1">
    <citation type="journal article" date="2008" name="J. Bacteriol.">
        <title>Genome of the actinomycete plant pathogen Clavibacter michiganensis subsp. sepedonicus suggests recent niche adaptation.</title>
        <authorList>
            <person name="Bentley S.D."/>
            <person name="Corton C."/>
            <person name="Brown S.E."/>
            <person name="Barron A."/>
            <person name="Clark L."/>
            <person name="Doggett J."/>
            <person name="Harris B."/>
            <person name="Ormond D."/>
            <person name="Quail M.A."/>
            <person name="May G."/>
            <person name="Francis D."/>
            <person name="Knudson D."/>
            <person name="Parkhill J."/>
            <person name="Ishimaru C.A."/>
        </authorList>
    </citation>
    <scope>NUCLEOTIDE SEQUENCE [LARGE SCALE GENOMIC DNA]</scope>
    <source>
        <strain>ATCC 33113 / DSM 20744 / JCM 9667 / LMG 2889 / ICMP 2535 / C-1</strain>
    </source>
</reference>
<protein>
    <recommendedName>
        <fullName evidence="1">Potassium-transporting ATPase potassium-binding subunit</fullName>
    </recommendedName>
    <alternativeName>
        <fullName evidence="1">ATP phosphohydrolase [potassium-transporting] A chain</fullName>
    </alternativeName>
    <alternativeName>
        <fullName evidence="1">Potassium-binding and translocating subunit A</fullName>
    </alternativeName>
    <alternativeName>
        <fullName evidence="1">Potassium-translocating ATPase A chain</fullName>
    </alternativeName>
</protein>
<comment type="function">
    <text evidence="1">Part of the high-affinity ATP-driven potassium transport (or Kdp) system, which catalyzes the hydrolysis of ATP coupled with the electrogenic transport of potassium into the cytoplasm. This subunit binds the extracellular potassium ions and delivers the ions to the membrane domain of KdpB through an intramembrane tunnel.</text>
</comment>
<comment type="subunit">
    <text evidence="1">The system is composed of three essential subunits: KdpA, KdpB and KdpC.</text>
</comment>
<comment type="subcellular location">
    <subcellularLocation>
        <location evidence="1">Cell membrane</location>
        <topology evidence="1">Multi-pass membrane protein</topology>
    </subcellularLocation>
</comment>
<comment type="similarity">
    <text evidence="1">Belongs to the KdpA family.</text>
</comment>
<organism>
    <name type="scientific">Clavibacter sepedonicus</name>
    <name type="common">Clavibacter michiganensis subsp. sepedonicus</name>
    <dbReference type="NCBI Taxonomy" id="31964"/>
    <lineage>
        <taxon>Bacteria</taxon>
        <taxon>Bacillati</taxon>
        <taxon>Actinomycetota</taxon>
        <taxon>Actinomycetes</taxon>
        <taxon>Micrococcales</taxon>
        <taxon>Microbacteriaceae</taxon>
        <taxon>Clavibacter</taxon>
    </lineage>
</organism>
<keyword id="KW-1003">Cell membrane</keyword>
<keyword id="KW-0406">Ion transport</keyword>
<keyword id="KW-0472">Membrane</keyword>
<keyword id="KW-0630">Potassium</keyword>
<keyword id="KW-0633">Potassium transport</keyword>
<keyword id="KW-0812">Transmembrane</keyword>
<keyword id="KW-1133">Transmembrane helix</keyword>
<keyword id="KW-0813">Transport</keyword>
<name>KDPA_CLASE</name>